<evidence type="ECO:0000255" key="1">
    <source>
        <dbReference type="HAMAP-Rule" id="MF_00311"/>
    </source>
</evidence>
<reference key="1">
    <citation type="submission" date="2008-04" db="EMBL/GenBank/DDBJ databases">
        <title>Complete sequence of Clostridium botulinum strain Eklund.</title>
        <authorList>
            <person name="Brinkac L.M."/>
            <person name="Brown J.L."/>
            <person name="Bruce D."/>
            <person name="Detter C."/>
            <person name="Munk C."/>
            <person name="Smith L.A."/>
            <person name="Smith T.J."/>
            <person name="Sutton G."/>
            <person name="Brettin T.S."/>
        </authorList>
    </citation>
    <scope>NUCLEOTIDE SEQUENCE [LARGE SCALE GENOMIC DNA]</scope>
    <source>
        <strain>Eklund 17B / Type B</strain>
    </source>
</reference>
<organism>
    <name type="scientific">Clostridium botulinum (strain Eklund 17B / Type B)</name>
    <dbReference type="NCBI Taxonomy" id="935198"/>
    <lineage>
        <taxon>Bacteria</taxon>
        <taxon>Bacillati</taxon>
        <taxon>Bacillota</taxon>
        <taxon>Clostridia</taxon>
        <taxon>Eubacteriales</taxon>
        <taxon>Clostridiaceae</taxon>
        <taxon>Clostridium</taxon>
    </lineage>
</organism>
<proteinExistence type="inferred from homology"/>
<protein>
    <recommendedName>
        <fullName evidence="1">V-type proton ATPase subunit E</fullName>
    </recommendedName>
    <alternativeName>
        <fullName evidence="1">V-ATPase subunit E</fullName>
    </alternativeName>
</protein>
<comment type="function">
    <text evidence="1">Produces ATP from ADP in the presence of a proton gradient across the membrane.</text>
</comment>
<comment type="similarity">
    <text evidence="1">Belongs to the V-ATPase E subunit family.</text>
</comment>
<accession>B2TP94</accession>
<feature type="chain" id="PRO_1000115674" description="V-type proton ATPase subunit E">
    <location>
        <begin position="1"/>
        <end position="196"/>
    </location>
</feature>
<name>VATE_CLOBB</name>
<dbReference type="EMBL" id="CP001056">
    <property type="protein sequence ID" value="ACD24593.1"/>
    <property type="molecule type" value="Genomic_DNA"/>
</dbReference>
<dbReference type="SMR" id="B2TP94"/>
<dbReference type="KEGG" id="cbk:CLL_A2864"/>
<dbReference type="PATRIC" id="fig|935198.13.peg.2825"/>
<dbReference type="HOGENOM" id="CLU_105846_0_0_9"/>
<dbReference type="Proteomes" id="UP000001195">
    <property type="component" value="Chromosome"/>
</dbReference>
<dbReference type="GO" id="GO:0033178">
    <property type="term" value="C:proton-transporting two-sector ATPase complex, catalytic domain"/>
    <property type="evidence" value="ECO:0007669"/>
    <property type="project" value="InterPro"/>
</dbReference>
<dbReference type="GO" id="GO:0005524">
    <property type="term" value="F:ATP binding"/>
    <property type="evidence" value="ECO:0007669"/>
    <property type="project" value="UniProtKB-UniRule"/>
</dbReference>
<dbReference type="GO" id="GO:0046933">
    <property type="term" value="F:proton-transporting ATP synthase activity, rotational mechanism"/>
    <property type="evidence" value="ECO:0007669"/>
    <property type="project" value="UniProtKB-UniRule"/>
</dbReference>
<dbReference type="GO" id="GO:0046961">
    <property type="term" value="F:proton-transporting ATPase activity, rotational mechanism"/>
    <property type="evidence" value="ECO:0007669"/>
    <property type="project" value="InterPro"/>
</dbReference>
<dbReference type="GO" id="GO:0042777">
    <property type="term" value="P:proton motive force-driven plasma membrane ATP synthesis"/>
    <property type="evidence" value="ECO:0007669"/>
    <property type="project" value="UniProtKB-UniRule"/>
</dbReference>
<dbReference type="Gene3D" id="1.20.5.620">
    <property type="entry name" value="F1F0 ATP synthase subunit B, membrane domain"/>
    <property type="match status" value="1"/>
</dbReference>
<dbReference type="HAMAP" id="MF_00311">
    <property type="entry name" value="ATP_synth_E_arch"/>
    <property type="match status" value="1"/>
</dbReference>
<dbReference type="InterPro" id="IPR002842">
    <property type="entry name" value="ATPase_V1_Esu"/>
</dbReference>
<dbReference type="Pfam" id="PF01991">
    <property type="entry name" value="vATP-synt_E"/>
    <property type="match status" value="1"/>
</dbReference>
<dbReference type="SUPFAM" id="SSF160527">
    <property type="entry name" value="V-type ATPase subunit E-like"/>
    <property type="match status" value="1"/>
</dbReference>
<keyword id="KW-0066">ATP synthesis</keyword>
<keyword id="KW-0375">Hydrogen ion transport</keyword>
<keyword id="KW-0406">Ion transport</keyword>
<keyword id="KW-0813">Transport</keyword>
<gene>
    <name evidence="1" type="primary">atpE</name>
    <name type="ordered locus">CLL_A2864</name>
</gene>
<sequence>MSNIDNLTSRIVKDAEDKKRIILSEAEEKKSKIIAKKQEKAASEEKIIIEKAETEAVAREERIISSAELQARNEKLKSKQTVISKVFETTIEELCNASSDDFKGFVKTVILNSALAGDENLILNEQGKKMIDSDFVAELNREIGSKGNITLSDKTGNFKGGFILEKNGIEINNTFEALVSSLKDEMGLEVARVLFS</sequence>